<accession>Q9XD30</accession>
<comment type="function">
    <text evidence="1">Binds the lower part of the 30S subunit head. Binds mRNA in the 70S ribosome, positioning it for translation.</text>
</comment>
<comment type="subunit">
    <text evidence="1">Part of the 30S ribosomal subunit. Forms a tight complex with proteins S10 and S14.</text>
</comment>
<comment type="similarity">
    <text evidence="1">Belongs to the universal ribosomal protein uS3 family.</text>
</comment>
<protein>
    <recommendedName>
        <fullName evidence="1">Small ribosomal subunit protein uS3</fullName>
    </recommendedName>
    <alternativeName>
        <fullName evidence="2">30S ribosomal protein S3</fullName>
    </alternativeName>
</protein>
<name>RS3_LEPIN</name>
<evidence type="ECO:0000255" key="1">
    <source>
        <dbReference type="HAMAP-Rule" id="MF_01309"/>
    </source>
</evidence>
<evidence type="ECO:0000305" key="2"/>
<organism>
    <name type="scientific">Leptospira interrogans serogroup Icterohaemorrhagiae serovar Lai (strain 56601)</name>
    <dbReference type="NCBI Taxonomy" id="189518"/>
    <lineage>
        <taxon>Bacteria</taxon>
        <taxon>Pseudomonadati</taxon>
        <taxon>Spirochaetota</taxon>
        <taxon>Spirochaetia</taxon>
        <taxon>Leptospirales</taxon>
        <taxon>Leptospiraceae</taxon>
        <taxon>Leptospira</taxon>
    </lineage>
</organism>
<keyword id="KW-1185">Reference proteome</keyword>
<keyword id="KW-0687">Ribonucleoprotein</keyword>
<keyword id="KW-0689">Ribosomal protein</keyword>
<keyword id="KW-0694">RNA-binding</keyword>
<keyword id="KW-0699">rRNA-binding</keyword>
<sequence length="225" mass="25672">MGQKVNPIGLRIGITRGWDSIWFSQSDYKKNLHEDIKIRKFVQNRFNNAGVVKVVIERFPEKINVNLHTAKPGIVIGQKGANIEAVKKILKTMTDKPVNLNIIEVKKPETVAQCIAESIALQIEQRQPFRRVMKQELRRAMRGGVEGIKILISGRLNGADMARRENYKEGRIPLHTLRAKIDLGFKEAKTTFGQIGVKVWTYSGDFIQSKEESEEDKYAVKRRTS</sequence>
<gene>
    <name evidence="1" type="primary">rpsC</name>
    <name type="ordered locus">LA_0745</name>
</gene>
<proteinExistence type="inferred from homology"/>
<dbReference type="EMBL" id="AF115283">
    <property type="protein sequence ID" value="AAD40589.1"/>
    <property type="molecule type" value="Genomic_DNA"/>
</dbReference>
<dbReference type="EMBL" id="AE010300">
    <property type="protein sequence ID" value="AAN47944.1"/>
    <property type="molecule type" value="Genomic_DNA"/>
</dbReference>
<dbReference type="RefSeq" id="NP_710926.1">
    <property type="nucleotide sequence ID" value="NC_004342.2"/>
</dbReference>
<dbReference type="RefSeq" id="WP_000529953.1">
    <property type="nucleotide sequence ID" value="NC_004342.2"/>
</dbReference>
<dbReference type="SMR" id="Q9XD30"/>
<dbReference type="FunCoup" id="Q9XD30">
    <property type="interactions" value="616"/>
</dbReference>
<dbReference type="STRING" id="189518.LA_0745"/>
<dbReference type="PaxDb" id="189518-LA_0745"/>
<dbReference type="EnsemblBacteria" id="AAN47944">
    <property type="protein sequence ID" value="AAN47944"/>
    <property type="gene ID" value="LA_0745"/>
</dbReference>
<dbReference type="GeneID" id="61142741"/>
<dbReference type="KEGG" id="lil:LA_0745"/>
<dbReference type="PATRIC" id="fig|189518.3.peg.751"/>
<dbReference type="HOGENOM" id="CLU_058591_0_2_12"/>
<dbReference type="InParanoid" id="Q9XD30"/>
<dbReference type="OrthoDB" id="9806396at2"/>
<dbReference type="Proteomes" id="UP000001408">
    <property type="component" value="Chromosome I"/>
</dbReference>
<dbReference type="GO" id="GO:0022627">
    <property type="term" value="C:cytosolic small ribosomal subunit"/>
    <property type="evidence" value="ECO:0000318"/>
    <property type="project" value="GO_Central"/>
</dbReference>
<dbReference type="GO" id="GO:0003729">
    <property type="term" value="F:mRNA binding"/>
    <property type="evidence" value="ECO:0007669"/>
    <property type="project" value="UniProtKB-UniRule"/>
</dbReference>
<dbReference type="GO" id="GO:0019843">
    <property type="term" value="F:rRNA binding"/>
    <property type="evidence" value="ECO:0007669"/>
    <property type="project" value="UniProtKB-UniRule"/>
</dbReference>
<dbReference type="GO" id="GO:0003735">
    <property type="term" value="F:structural constituent of ribosome"/>
    <property type="evidence" value="ECO:0000318"/>
    <property type="project" value="GO_Central"/>
</dbReference>
<dbReference type="GO" id="GO:0006412">
    <property type="term" value="P:translation"/>
    <property type="evidence" value="ECO:0007669"/>
    <property type="project" value="UniProtKB-UniRule"/>
</dbReference>
<dbReference type="CDD" id="cd02412">
    <property type="entry name" value="KH-II_30S_S3"/>
    <property type="match status" value="1"/>
</dbReference>
<dbReference type="FunFam" id="3.30.1140.32:FF:000010">
    <property type="entry name" value="30S ribosomal protein S3"/>
    <property type="match status" value="1"/>
</dbReference>
<dbReference type="FunFam" id="3.30.300.20:FF:000001">
    <property type="entry name" value="30S ribosomal protein S3"/>
    <property type="match status" value="1"/>
</dbReference>
<dbReference type="Gene3D" id="3.30.300.20">
    <property type="match status" value="1"/>
</dbReference>
<dbReference type="Gene3D" id="3.30.1140.32">
    <property type="entry name" value="Ribosomal protein S3, C-terminal domain"/>
    <property type="match status" value="1"/>
</dbReference>
<dbReference type="HAMAP" id="MF_01309_B">
    <property type="entry name" value="Ribosomal_uS3_B"/>
    <property type="match status" value="1"/>
</dbReference>
<dbReference type="InterPro" id="IPR004087">
    <property type="entry name" value="KH_dom"/>
</dbReference>
<dbReference type="InterPro" id="IPR015946">
    <property type="entry name" value="KH_dom-like_a/b"/>
</dbReference>
<dbReference type="InterPro" id="IPR004044">
    <property type="entry name" value="KH_dom_type_2"/>
</dbReference>
<dbReference type="InterPro" id="IPR009019">
    <property type="entry name" value="KH_sf_prok-type"/>
</dbReference>
<dbReference type="InterPro" id="IPR036419">
    <property type="entry name" value="Ribosomal_S3_C_sf"/>
</dbReference>
<dbReference type="InterPro" id="IPR005704">
    <property type="entry name" value="Ribosomal_uS3_bac-typ"/>
</dbReference>
<dbReference type="InterPro" id="IPR001351">
    <property type="entry name" value="Ribosomal_uS3_C"/>
</dbReference>
<dbReference type="InterPro" id="IPR018280">
    <property type="entry name" value="Ribosomal_uS3_CS"/>
</dbReference>
<dbReference type="NCBIfam" id="TIGR01009">
    <property type="entry name" value="rpsC_bact"/>
    <property type="match status" value="1"/>
</dbReference>
<dbReference type="PANTHER" id="PTHR11760">
    <property type="entry name" value="30S/40S RIBOSOMAL PROTEIN S3"/>
    <property type="match status" value="1"/>
</dbReference>
<dbReference type="PANTHER" id="PTHR11760:SF19">
    <property type="entry name" value="SMALL RIBOSOMAL SUBUNIT PROTEIN US3C"/>
    <property type="match status" value="1"/>
</dbReference>
<dbReference type="Pfam" id="PF07650">
    <property type="entry name" value="KH_2"/>
    <property type="match status" value="1"/>
</dbReference>
<dbReference type="Pfam" id="PF00189">
    <property type="entry name" value="Ribosomal_S3_C"/>
    <property type="match status" value="1"/>
</dbReference>
<dbReference type="SMART" id="SM00322">
    <property type="entry name" value="KH"/>
    <property type="match status" value="1"/>
</dbReference>
<dbReference type="SUPFAM" id="SSF54814">
    <property type="entry name" value="Prokaryotic type KH domain (KH-domain type II)"/>
    <property type="match status" value="1"/>
</dbReference>
<dbReference type="SUPFAM" id="SSF54821">
    <property type="entry name" value="Ribosomal protein S3 C-terminal domain"/>
    <property type="match status" value="1"/>
</dbReference>
<dbReference type="PROSITE" id="PS50823">
    <property type="entry name" value="KH_TYPE_2"/>
    <property type="match status" value="1"/>
</dbReference>
<dbReference type="PROSITE" id="PS00548">
    <property type="entry name" value="RIBOSOMAL_S3"/>
    <property type="match status" value="1"/>
</dbReference>
<feature type="chain" id="PRO_0000130141" description="Small ribosomal subunit protein uS3">
    <location>
        <begin position="1"/>
        <end position="225"/>
    </location>
</feature>
<feature type="domain" description="KH type-2" evidence="1">
    <location>
        <begin position="38"/>
        <end position="106"/>
    </location>
</feature>
<reference key="1">
    <citation type="journal article" date="2000" name="FEMS Microbiol. Lett.">
        <title>Characterization of the Leptospira interrogans S10-spc-alpha operon.</title>
        <authorList>
            <person name="Zuerner R.L."/>
            <person name="Hartskeerl R.A."/>
            <person name="van de Kemp H."/>
            <person name="Bal A.E."/>
        </authorList>
    </citation>
    <scope>NUCLEOTIDE SEQUENCE [GENOMIC DNA]</scope>
    <source>
        <strain>Lai / Serogroup Icterohaemorrhagiae / Serovar lai</strain>
    </source>
</reference>
<reference key="2">
    <citation type="journal article" date="2003" name="Nature">
        <title>Unique physiological and pathogenic features of Leptospira interrogans revealed by whole-genome sequencing.</title>
        <authorList>
            <person name="Ren S.-X."/>
            <person name="Fu G."/>
            <person name="Jiang X.-G."/>
            <person name="Zeng R."/>
            <person name="Miao Y.-G."/>
            <person name="Xu H."/>
            <person name="Zhang Y.-X."/>
            <person name="Xiong H."/>
            <person name="Lu G."/>
            <person name="Lu L.-F."/>
            <person name="Jiang H.-Q."/>
            <person name="Jia J."/>
            <person name="Tu Y.-F."/>
            <person name="Jiang J.-X."/>
            <person name="Gu W.-Y."/>
            <person name="Zhang Y.-Q."/>
            <person name="Cai Z."/>
            <person name="Sheng H.-H."/>
            <person name="Yin H.-F."/>
            <person name="Zhang Y."/>
            <person name="Zhu G.-F."/>
            <person name="Wan M."/>
            <person name="Huang H.-L."/>
            <person name="Qian Z."/>
            <person name="Wang S.-Y."/>
            <person name="Ma W."/>
            <person name="Yao Z.-J."/>
            <person name="Shen Y."/>
            <person name="Qiang B.-Q."/>
            <person name="Xia Q.-C."/>
            <person name="Guo X.-K."/>
            <person name="Danchin A."/>
            <person name="Saint Girons I."/>
            <person name="Somerville R.L."/>
            <person name="Wen Y.-M."/>
            <person name="Shi M.-H."/>
            <person name="Chen Z."/>
            <person name="Xu J.-G."/>
            <person name="Zhao G.-P."/>
        </authorList>
    </citation>
    <scope>NUCLEOTIDE SEQUENCE [LARGE SCALE GENOMIC DNA]</scope>
    <source>
        <strain>56601</strain>
    </source>
</reference>